<dbReference type="EMBL" id="X64562">
    <property type="protein sequence ID" value="CAA45863.1"/>
    <property type="molecule type" value="mRNA"/>
</dbReference>
<dbReference type="PIR" id="JQ2231">
    <property type="entry name" value="R5TOL8"/>
</dbReference>
<dbReference type="PDB" id="7QIW">
    <property type="method" value="EM"/>
    <property type="resolution" value="2.35 A"/>
    <property type="chains" value="D=1-260"/>
</dbReference>
<dbReference type="PDB" id="7QIZ">
    <property type="method" value="EM"/>
    <property type="resolution" value="2.38 A"/>
    <property type="chains" value="D=1-260"/>
</dbReference>
<dbReference type="PDBsum" id="7QIW"/>
<dbReference type="PDBsum" id="7QIZ"/>
<dbReference type="EMDB" id="EMD-14001"/>
<dbReference type="EMDB" id="EMD-14004"/>
<dbReference type="SMR" id="P29766"/>
<dbReference type="FunCoup" id="P29766">
    <property type="interactions" value="2828"/>
</dbReference>
<dbReference type="STRING" id="4081.P29766"/>
<dbReference type="PaxDb" id="4081-Solyc10g006580.2.1"/>
<dbReference type="eggNOG" id="KOG2309">
    <property type="taxonomic scope" value="Eukaryota"/>
</dbReference>
<dbReference type="InParanoid" id="P29766"/>
<dbReference type="Proteomes" id="UP000004994">
    <property type="component" value="Unplaced"/>
</dbReference>
<dbReference type="ExpressionAtlas" id="P29766">
    <property type="expression patterns" value="baseline and differential"/>
</dbReference>
<dbReference type="GO" id="GO:0022625">
    <property type="term" value="C:cytosolic large ribosomal subunit"/>
    <property type="evidence" value="ECO:0000318"/>
    <property type="project" value="GO_Central"/>
</dbReference>
<dbReference type="GO" id="GO:0003723">
    <property type="term" value="F:RNA binding"/>
    <property type="evidence" value="ECO:0000318"/>
    <property type="project" value="GO_Central"/>
</dbReference>
<dbReference type="GO" id="GO:0003735">
    <property type="term" value="F:structural constituent of ribosome"/>
    <property type="evidence" value="ECO:0000318"/>
    <property type="project" value="GO_Central"/>
</dbReference>
<dbReference type="GO" id="GO:0002181">
    <property type="term" value="P:cytoplasmic translation"/>
    <property type="evidence" value="ECO:0000318"/>
    <property type="project" value="GO_Central"/>
</dbReference>
<dbReference type="FunFam" id="2.40.50.140:FF:000020">
    <property type="entry name" value="60S ribosomal protein L2"/>
    <property type="match status" value="1"/>
</dbReference>
<dbReference type="FunFam" id="4.10.950.10:FF:000002">
    <property type="entry name" value="60S ribosomal protein L2"/>
    <property type="match status" value="1"/>
</dbReference>
<dbReference type="FunFam" id="2.30.30.30:FF:000006">
    <property type="entry name" value="60S ribosomal protein L8"/>
    <property type="match status" value="1"/>
</dbReference>
<dbReference type="Gene3D" id="2.30.30.30">
    <property type="match status" value="1"/>
</dbReference>
<dbReference type="Gene3D" id="2.40.50.140">
    <property type="entry name" value="Nucleic acid-binding proteins"/>
    <property type="match status" value="1"/>
</dbReference>
<dbReference type="Gene3D" id="4.10.950.10">
    <property type="entry name" value="Ribosomal protein L2, domain 3"/>
    <property type="match status" value="1"/>
</dbReference>
<dbReference type="InterPro" id="IPR012340">
    <property type="entry name" value="NA-bd_OB-fold"/>
</dbReference>
<dbReference type="InterPro" id="IPR014722">
    <property type="entry name" value="Rib_uL2_dom2"/>
</dbReference>
<dbReference type="InterPro" id="IPR002171">
    <property type="entry name" value="Ribosomal_uL2"/>
</dbReference>
<dbReference type="InterPro" id="IPR023672">
    <property type="entry name" value="Ribosomal_uL2_arc_euk"/>
</dbReference>
<dbReference type="InterPro" id="IPR022669">
    <property type="entry name" value="Ribosomal_uL2_C"/>
</dbReference>
<dbReference type="InterPro" id="IPR022671">
    <property type="entry name" value="Ribosomal_uL2_CS"/>
</dbReference>
<dbReference type="InterPro" id="IPR014726">
    <property type="entry name" value="Ribosomal_uL2_dom3"/>
</dbReference>
<dbReference type="InterPro" id="IPR022666">
    <property type="entry name" value="Ribosomal_uL2_RNA-bd_dom"/>
</dbReference>
<dbReference type="InterPro" id="IPR008991">
    <property type="entry name" value="Translation_prot_SH3-like_sf"/>
</dbReference>
<dbReference type="NCBIfam" id="NF007180">
    <property type="entry name" value="PRK09612.1"/>
    <property type="match status" value="1"/>
</dbReference>
<dbReference type="PANTHER" id="PTHR13691:SF16">
    <property type="entry name" value="LARGE RIBOSOMAL SUBUNIT PROTEIN UL2"/>
    <property type="match status" value="1"/>
</dbReference>
<dbReference type="PANTHER" id="PTHR13691">
    <property type="entry name" value="RIBOSOMAL PROTEIN L2"/>
    <property type="match status" value="1"/>
</dbReference>
<dbReference type="Pfam" id="PF00181">
    <property type="entry name" value="Ribosomal_L2"/>
    <property type="match status" value="1"/>
</dbReference>
<dbReference type="Pfam" id="PF03947">
    <property type="entry name" value="Ribosomal_L2_C"/>
    <property type="match status" value="1"/>
</dbReference>
<dbReference type="PIRSF" id="PIRSF002158">
    <property type="entry name" value="Ribosomal_L2"/>
    <property type="match status" value="1"/>
</dbReference>
<dbReference type="SMART" id="SM01383">
    <property type="entry name" value="Ribosomal_L2"/>
    <property type="match status" value="1"/>
</dbReference>
<dbReference type="SMART" id="SM01382">
    <property type="entry name" value="Ribosomal_L2_C"/>
    <property type="match status" value="1"/>
</dbReference>
<dbReference type="SUPFAM" id="SSF50249">
    <property type="entry name" value="Nucleic acid-binding proteins"/>
    <property type="match status" value="1"/>
</dbReference>
<dbReference type="SUPFAM" id="SSF50104">
    <property type="entry name" value="Translation proteins SH3-like domain"/>
    <property type="match status" value="1"/>
</dbReference>
<dbReference type="PROSITE" id="PS00467">
    <property type="entry name" value="RIBOSOMAL_L2"/>
    <property type="match status" value="1"/>
</dbReference>
<name>RL8_SOLLC</name>
<evidence type="ECO:0000256" key="1">
    <source>
        <dbReference type="SAM" id="MobiDB-lite"/>
    </source>
</evidence>
<evidence type="ECO:0000305" key="2"/>
<feature type="chain" id="PRO_0000129734" description="Large ribosomal subunit protein uL2">
    <location>
        <begin position="1"/>
        <end position="260"/>
    </location>
</feature>
<feature type="region of interest" description="Disordered" evidence="1">
    <location>
        <begin position="1"/>
        <end position="24"/>
    </location>
</feature>
<protein>
    <recommendedName>
        <fullName evidence="2">Large ribosomal subunit protein uL2</fullName>
    </recommendedName>
    <alternativeName>
        <fullName>60S ribosomal protein L8</fullName>
    </alternativeName>
    <alternativeName>
        <fullName>L2</fullName>
    </alternativeName>
    <alternativeName>
        <fullName>Ribosomal protein TL2</fullName>
    </alternativeName>
</protein>
<organism>
    <name type="scientific">Solanum lycopersicum</name>
    <name type="common">Tomato</name>
    <name type="synonym">Lycopersicon esculentum</name>
    <dbReference type="NCBI Taxonomy" id="4081"/>
    <lineage>
        <taxon>Eukaryota</taxon>
        <taxon>Viridiplantae</taxon>
        <taxon>Streptophyta</taxon>
        <taxon>Embryophyta</taxon>
        <taxon>Tracheophyta</taxon>
        <taxon>Spermatophyta</taxon>
        <taxon>Magnoliopsida</taxon>
        <taxon>eudicotyledons</taxon>
        <taxon>Gunneridae</taxon>
        <taxon>Pentapetalae</taxon>
        <taxon>asterids</taxon>
        <taxon>lamiids</taxon>
        <taxon>Solanales</taxon>
        <taxon>Solanaceae</taxon>
        <taxon>Solanoideae</taxon>
        <taxon>Solaneae</taxon>
        <taxon>Solanum</taxon>
        <taxon>Solanum subgen. Lycopersicon</taxon>
    </lineage>
</organism>
<comment type="subcellular location">
    <subcellularLocation>
        <location>Cytoplasm</location>
    </subcellularLocation>
</comment>
<comment type="similarity">
    <text evidence="2">Belongs to the universal ribosomal protein uL2 family.</text>
</comment>
<reference key="1">
    <citation type="journal article" date="1993" name="Plant Cell">
        <title>The patterns of gene expression in the tomato shoot apical meristem.</title>
        <authorList>
            <person name="Fleming A.J."/>
            <person name="Mandel T."/>
            <person name="Roth I."/>
            <person name="Kuhlemeier C."/>
        </authorList>
    </citation>
    <scope>NUCLEOTIDE SEQUENCE [MRNA]</scope>
    <source>
        <strain>cv. Moneymaker</strain>
        <tissue>Shoot apex</tissue>
    </source>
</reference>
<keyword id="KW-0002">3D-structure</keyword>
<keyword id="KW-0963">Cytoplasm</keyword>
<keyword id="KW-1185">Reference proteome</keyword>
<keyword id="KW-0687">Ribonucleoprotein</keyword>
<keyword id="KW-0689">Ribosomal protein</keyword>
<gene>
    <name type="primary">RPL8</name>
    <name type="synonym">RPL2</name>
</gene>
<sequence length="260" mass="28271">MGRVIRAQRKGAGSVFKSHTHHRKGPARFRTLDFGERNGYLKGVITEVIHDPGRGAPLARVTFRHPFRYKHQKELFVAAEGMYTGQFVYCGKKATLMVGNVLPLRSIPEGAVVCNVEHKVGDRGVFARCSGDYAIVISHNPDNGTTRVKLPSGAKKIVPSGCRAMIGQVAGGGRTEKPMLKAGNAYHKYRVKRNCWPKVRGVAMNPVEHPHGGGNHQHIGHASTVRRDAPPGQKVGLIAARRTGRLRGQARATAAKADKA</sequence>
<accession>P29766</accession>
<proteinExistence type="evidence at protein level"/>